<comment type="function">
    <text evidence="1">Negatively regulates its own expression and that of the subsequent genes in the proximal part of the division and cell wall (dcw) gene cluster. Acts by binding directly to DNA. May also regulate the expression of genes outside the dcw cluster.</text>
</comment>
<comment type="subunit">
    <text evidence="1">Forms oligomers.</text>
</comment>
<comment type="subcellular location">
    <subcellularLocation>
        <location evidence="1">Cytoplasm</location>
        <location evidence="1">Nucleoid</location>
    </subcellularLocation>
</comment>
<comment type="similarity">
    <text evidence="1">Belongs to the MraZ family.</text>
</comment>
<gene>
    <name evidence="1" type="primary">mraZ</name>
    <name type="ordered locus">ECP_0083</name>
</gene>
<proteinExistence type="inferred from homology"/>
<dbReference type="EMBL" id="CP000247">
    <property type="protein sequence ID" value="ABG68123.1"/>
    <property type="molecule type" value="Genomic_DNA"/>
</dbReference>
<dbReference type="RefSeq" id="WP_001295770.1">
    <property type="nucleotide sequence ID" value="NC_008253.1"/>
</dbReference>
<dbReference type="SMR" id="Q0TLQ8"/>
<dbReference type="GeneID" id="75202102"/>
<dbReference type="KEGG" id="ecp:ECP_0083"/>
<dbReference type="HOGENOM" id="CLU_107907_2_0_6"/>
<dbReference type="Proteomes" id="UP000009182">
    <property type="component" value="Chromosome"/>
</dbReference>
<dbReference type="GO" id="GO:0005737">
    <property type="term" value="C:cytoplasm"/>
    <property type="evidence" value="ECO:0007669"/>
    <property type="project" value="UniProtKB-UniRule"/>
</dbReference>
<dbReference type="GO" id="GO:0009295">
    <property type="term" value="C:nucleoid"/>
    <property type="evidence" value="ECO:0007669"/>
    <property type="project" value="UniProtKB-SubCell"/>
</dbReference>
<dbReference type="GO" id="GO:0003700">
    <property type="term" value="F:DNA-binding transcription factor activity"/>
    <property type="evidence" value="ECO:0007669"/>
    <property type="project" value="UniProtKB-UniRule"/>
</dbReference>
<dbReference type="GO" id="GO:0000976">
    <property type="term" value="F:transcription cis-regulatory region binding"/>
    <property type="evidence" value="ECO:0007669"/>
    <property type="project" value="TreeGrafter"/>
</dbReference>
<dbReference type="GO" id="GO:2000143">
    <property type="term" value="P:negative regulation of DNA-templated transcription initiation"/>
    <property type="evidence" value="ECO:0007669"/>
    <property type="project" value="TreeGrafter"/>
</dbReference>
<dbReference type="CDD" id="cd16321">
    <property type="entry name" value="MraZ_C"/>
    <property type="match status" value="1"/>
</dbReference>
<dbReference type="CDD" id="cd16320">
    <property type="entry name" value="MraZ_N"/>
    <property type="match status" value="1"/>
</dbReference>
<dbReference type="FunFam" id="3.40.1550.20:FF:000001">
    <property type="entry name" value="Transcriptional regulator MraZ"/>
    <property type="match status" value="1"/>
</dbReference>
<dbReference type="Gene3D" id="3.40.1550.20">
    <property type="entry name" value="Transcriptional regulator MraZ domain"/>
    <property type="match status" value="1"/>
</dbReference>
<dbReference type="HAMAP" id="MF_01008">
    <property type="entry name" value="MraZ"/>
    <property type="match status" value="1"/>
</dbReference>
<dbReference type="InterPro" id="IPR003444">
    <property type="entry name" value="MraZ"/>
</dbReference>
<dbReference type="InterPro" id="IPR035644">
    <property type="entry name" value="MraZ_C"/>
</dbReference>
<dbReference type="InterPro" id="IPR020603">
    <property type="entry name" value="MraZ_dom"/>
</dbReference>
<dbReference type="InterPro" id="IPR035642">
    <property type="entry name" value="MraZ_N"/>
</dbReference>
<dbReference type="InterPro" id="IPR038619">
    <property type="entry name" value="MraZ_sf"/>
</dbReference>
<dbReference type="InterPro" id="IPR007159">
    <property type="entry name" value="SpoVT-AbrB_dom"/>
</dbReference>
<dbReference type="InterPro" id="IPR037914">
    <property type="entry name" value="SpoVT-AbrB_sf"/>
</dbReference>
<dbReference type="NCBIfam" id="TIGR00242">
    <property type="entry name" value="division/cell wall cluster transcriptional repressor MraZ"/>
    <property type="match status" value="1"/>
</dbReference>
<dbReference type="PANTHER" id="PTHR34701">
    <property type="entry name" value="TRANSCRIPTIONAL REGULATOR MRAZ"/>
    <property type="match status" value="1"/>
</dbReference>
<dbReference type="PANTHER" id="PTHR34701:SF1">
    <property type="entry name" value="TRANSCRIPTIONAL REGULATOR MRAZ"/>
    <property type="match status" value="1"/>
</dbReference>
<dbReference type="Pfam" id="PF02381">
    <property type="entry name" value="MraZ"/>
    <property type="match status" value="2"/>
</dbReference>
<dbReference type="SUPFAM" id="SSF89447">
    <property type="entry name" value="AbrB/MazE/MraZ-like"/>
    <property type="match status" value="1"/>
</dbReference>
<dbReference type="PROSITE" id="PS51740">
    <property type="entry name" value="SPOVT_ABRB"/>
    <property type="match status" value="2"/>
</dbReference>
<accession>Q0TLQ8</accession>
<sequence>MFRGATLVNLDSKGRLSVPTRYREQLLENAAGQMVCTIDIHHPCLLLYPLPEWEIIEQKLSRLSSMNPVERRVQRLLLGHASECQMDGAGRLLIAPVLRQHAGLTKEVMLVGQFNKFELWDETTWHQQVKEDIDAEQLATGDLSERLQDLSL</sequence>
<organism>
    <name type="scientific">Escherichia coli O6:K15:H31 (strain 536 / UPEC)</name>
    <dbReference type="NCBI Taxonomy" id="362663"/>
    <lineage>
        <taxon>Bacteria</taxon>
        <taxon>Pseudomonadati</taxon>
        <taxon>Pseudomonadota</taxon>
        <taxon>Gammaproteobacteria</taxon>
        <taxon>Enterobacterales</taxon>
        <taxon>Enterobacteriaceae</taxon>
        <taxon>Escherichia</taxon>
    </lineage>
</organism>
<evidence type="ECO:0000255" key="1">
    <source>
        <dbReference type="HAMAP-Rule" id="MF_01008"/>
    </source>
</evidence>
<evidence type="ECO:0000255" key="2">
    <source>
        <dbReference type="PROSITE-ProRule" id="PRU01076"/>
    </source>
</evidence>
<reference key="1">
    <citation type="journal article" date="2006" name="Mol. Microbiol.">
        <title>Role of pathogenicity island-associated integrases in the genome plasticity of uropathogenic Escherichia coli strain 536.</title>
        <authorList>
            <person name="Hochhut B."/>
            <person name="Wilde C."/>
            <person name="Balling G."/>
            <person name="Middendorf B."/>
            <person name="Dobrindt U."/>
            <person name="Brzuszkiewicz E."/>
            <person name="Gottschalk G."/>
            <person name="Carniel E."/>
            <person name="Hacker J."/>
        </authorList>
    </citation>
    <scope>NUCLEOTIDE SEQUENCE [LARGE SCALE GENOMIC DNA]</scope>
    <source>
        <strain>536 / UPEC</strain>
    </source>
</reference>
<keyword id="KW-0963">Cytoplasm</keyword>
<keyword id="KW-0238">DNA-binding</keyword>
<keyword id="KW-0677">Repeat</keyword>
<keyword id="KW-0678">Repressor</keyword>
<keyword id="KW-0804">Transcription</keyword>
<keyword id="KW-0805">Transcription regulation</keyword>
<name>MRAZ_ECOL5</name>
<protein>
    <recommendedName>
        <fullName>Transcriptional regulator MraZ</fullName>
    </recommendedName>
</protein>
<feature type="chain" id="PRO_1000062873" description="Transcriptional regulator MraZ">
    <location>
        <begin position="1"/>
        <end position="152"/>
    </location>
</feature>
<feature type="domain" description="SpoVT-AbrB 1" evidence="2">
    <location>
        <begin position="5"/>
        <end position="52"/>
    </location>
</feature>
<feature type="domain" description="SpoVT-AbrB 2" evidence="2">
    <location>
        <begin position="81"/>
        <end position="124"/>
    </location>
</feature>